<feature type="signal peptide" evidence="1">
    <location>
        <begin position="1"/>
        <end position="25"/>
    </location>
</feature>
<feature type="chain" id="PRO_0000355022" description="Putative outer membrane porin BglH">
    <location>
        <begin position="26"/>
        <end position="538"/>
    </location>
</feature>
<proteinExistence type="inferred from homology"/>
<accession>Q8CVJ9</accession>
<organism>
    <name type="scientific">Escherichia coli O6:H1 (strain CFT073 / ATCC 700928 / UPEC)</name>
    <dbReference type="NCBI Taxonomy" id="199310"/>
    <lineage>
        <taxon>Bacteria</taxon>
        <taxon>Pseudomonadati</taxon>
        <taxon>Pseudomonadota</taxon>
        <taxon>Gammaproteobacteria</taxon>
        <taxon>Enterobacterales</taxon>
        <taxon>Enterobacteriaceae</taxon>
        <taxon>Escherichia</taxon>
    </lineage>
</organism>
<evidence type="ECO:0000255" key="1"/>
<evidence type="ECO:0000305" key="2"/>
<name>BGLH_ECOL6</name>
<protein>
    <recommendedName>
        <fullName>Putative outer membrane porin BglH</fullName>
    </recommendedName>
</protein>
<reference key="1">
    <citation type="journal article" date="2002" name="Proc. Natl. Acad. Sci. U.S.A.">
        <title>Extensive mosaic structure revealed by the complete genome sequence of uropathogenic Escherichia coli.</title>
        <authorList>
            <person name="Welch R.A."/>
            <person name="Burland V."/>
            <person name="Plunkett G. III"/>
            <person name="Redford P."/>
            <person name="Roesch P."/>
            <person name="Rasko D."/>
            <person name="Buckles E.L."/>
            <person name="Liou S.-R."/>
            <person name="Boutin A."/>
            <person name="Hackett J."/>
            <person name="Stroud D."/>
            <person name="Mayhew G.F."/>
            <person name="Rose D.J."/>
            <person name="Zhou S."/>
            <person name="Schwartz D.C."/>
            <person name="Perna N.T."/>
            <person name="Mobley H.L.T."/>
            <person name="Donnenberg M.S."/>
            <person name="Blattner F.R."/>
        </authorList>
    </citation>
    <scope>NUCLEOTIDE SEQUENCE [LARGE SCALE GENOMIC DNA]</scope>
    <source>
        <strain>CFT073 / ATCC 700928 / UPEC</strain>
    </source>
</reference>
<dbReference type="EMBL" id="AE014075">
    <property type="protein sequence ID" value="AAN83074.1"/>
    <property type="molecule type" value="Genomic_DNA"/>
</dbReference>
<dbReference type="RefSeq" id="WP_000489816.1">
    <property type="nucleotide sequence ID" value="NZ_CP051263.1"/>
</dbReference>
<dbReference type="SMR" id="Q8CVJ9"/>
<dbReference type="STRING" id="199310.c4642"/>
<dbReference type="KEGG" id="ecc:c4642"/>
<dbReference type="eggNOG" id="COG4580">
    <property type="taxonomic scope" value="Bacteria"/>
</dbReference>
<dbReference type="HOGENOM" id="CLU_032473_2_1_6"/>
<dbReference type="BioCyc" id="ECOL199310:C4642-MONOMER"/>
<dbReference type="Proteomes" id="UP000001410">
    <property type="component" value="Chromosome"/>
</dbReference>
<dbReference type="GO" id="GO:0009279">
    <property type="term" value="C:cell outer membrane"/>
    <property type="evidence" value="ECO:0007669"/>
    <property type="project" value="UniProtKB-SubCell"/>
</dbReference>
<dbReference type="GO" id="GO:0046930">
    <property type="term" value="C:pore complex"/>
    <property type="evidence" value="ECO:0007669"/>
    <property type="project" value="UniProtKB-KW"/>
</dbReference>
<dbReference type="GO" id="GO:0015144">
    <property type="term" value="F:carbohydrate transmembrane transporter activity"/>
    <property type="evidence" value="ECO:0007669"/>
    <property type="project" value="TreeGrafter"/>
</dbReference>
<dbReference type="GO" id="GO:0015288">
    <property type="term" value="F:porin activity"/>
    <property type="evidence" value="ECO:0007669"/>
    <property type="project" value="UniProtKB-KW"/>
</dbReference>
<dbReference type="GO" id="GO:0006811">
    <property type="term" value="P:monoatomic ion transport"/>
    <property type="evidence" value="ECO:0007669"/>
    <property type="project" value="UniProtKB-KW"/>
</dbReference>
<dbReference type="GO" id="GO:0015774">
    <property type="term" value="P:polysaccharide transport"/>
    <property type="evidence" value="ECO:0007669"/>
    <property type="project" value="TreeGrafter"/>
</dbReference>
<dbReference type="CDD" id="cd01346">
    <property type="entry name" value="Maltoporin-like"/>
    <property type="match status" value="1"/>
</dbReference>
<dbReference type="FunFam" id="2.40.170.10:FF:000002">
    <property type="entry name" value="Cryptic outer membrane porin BglH"/>
    <property type="match status" value="1"/>
</dbReference>
<dbReference type="Gene3D" id="2.40.170.10">
    <property type="entry name" value="Porin, LamB type"/>
    <property type="match status" value="1"/>
</dbReference>
<dbReference type="InterPro" id="IPR050286">
    <property type="entry name" value="G_neg_Bact_CarbUptk_Porin"/>
</dbReference>
<dbReference type="InterPro" id="IPR021570">
    <property type="entry name" value="LamB-type_porin_N_dom"/>
</dbReference>
<dbReference type="InterPro" id="IPR003192">
    <property type="entry name" value="Porin_LamB"/>
</dbReference>
<dbReference type="InterPro" id="IPR036998">
    <property type="entry name" value="Porin_LamB_sf"/>
</dbReference>
<dbReference type="PANTHER" id="PTHR38762">
    <property type="entry name" value="CRYPTIC OUTER MEMBRANE PORIN BGLH-RELATED"/>
    <property type="match status" value="1"/>
</dbReference>
<dbReference type="PANTHER" id="PTHR38762:SF1">
    <property type="entry name" value="CRYPTIC OUTER MEMBRANE PORIN BGLH-RELATED"/>
    <property type="match status" value="1"/>
</dbReference>
<dbReference type="Pfam" id="PF02264">
    <property type="entry name" value="LamB"/>
    <property type="match status" value="1"/>
</dbReference>
<dbReference type="Pfam" id="PF11471">
    <property type="entry name" value="Sugarporin_N"/>
    <property type="match status" value="1"/>
</dbReference>
<dbReference type="SUPFAM" id="SSF56935">
    <property type="entry name" value="Porins"/>
    <property type="match status" value="1"/>
</dbReference>
<gene>
    <name type="primary">bglH</name>
    <name type="ordered locus">c4642</name>
</gene>
<keyword id="KW-0998">Cell outer membrane</keyword>
<keyword id="KW-0406">Ion transport</keyword>
<keyword id="KW-0472">Membrane</keyword>
<keyword id="KW-0626">Porin</keyword>
<keyword id="KW-1185">Reference proteome</keyword>
<keyword id="KW-0732">Signal</keyword>
<keyword id="KW-0812">Transmembrane</keyword>
<keyword id="KW-1134">Transmembrane beta strand</keyword>
<keyword id="KW-0813">Transport</keyword>
<comment type="function">
    <text evidence="2">May be a sugar porin with a broad carbohydrate specificity.</text>
</comment>
<comment type="subcellular location">
    <subcellularLocation>
        <location evidence="2">Cell outer membrane</location>
        <topology evidence="2">Multi-pass membrane protein</topology>
    </subcellularLocation>
</comment>
<comment type="similarity">
    <text evidence="2">Belongs to the porin LamB (TC 1.B.3) family.</text>
</comment>
<sequence>MFRRNIITSAILLMAPLAFSAQSLAESLTVEQRLELLEKALRETQSELKKYKDEEKKKYTPATVNRSVSTNDQGYAANPFPTSRAAKPDAVLVKNEEKNASETGSIYSSMTLKDFSKFVKDEIGFSYNGYYRSGWGTASHGSPKSWAIGSLGRFGNEYSGWFDLQLKQRVYNENGKRVDAIVMMDGNVGQQYSTGWFGDNAGGENFMQFSDMYVTTKGFLPFAPEADFWVGKHGAPKIEIQMLDWKTQRTDAAAGVGLENWKVGPGKIDIALVREDVDDYDRSLQNKQQINTNTIDLRYKDIPLWDKATLMVSGRYVSANESASEKDNQDNNGYYDWKETWMFGTSLTQKFDKGGFNEFSFLVANNSIASNFGRYAGASPFTTFNGRYYGDHTGGTAVRLTSQGEAYIGDHFIVANAIVYSFGNDIYSYETGAHSDFESIRAVVRPAYIWDQYNQTGVELGYFTQQNKDANSNKYNESGYKTTLFHTFKVNTSMLTSRPEIRFYATYIKALENELDGFTFEDNKDDQFAVGAQAEIWW</sequence>